<sequence length="433" mass="49860">MLSYKKVLIVGRPNVGKSALFNRILDTKRSITENTYGVTRDLVEEVCKVGSFKFKLIDTGGFTILKDEISKIVVQKVLSSLEKVDLILLVLDVNEILLEDYQIIERLRKYSNKVILVLNKVDAKDKEFLAHEFHNLGFKRCFLVSAVHCRGIAKLRDFLKVEVGEANIEDEVNIKVGIIGKPNSGKSTLINYLSGNEISIVSDKPGTTRDFIKTKLTRNGKVFEIIDTAGIRRRARVNEIVEYYSVNRALKVIDMVDIVFLLIDVKEELTSQDKKIAHYVTKKGKGIIIVFSKWDLVKESKGYFEALKSRVKFFFPVLNFAPIFRISVHKKIGLDSLFKEAFKLKDQLEFKTSTPDLNKMLNLWIKDYHLNVSHKIKYITQVSANPVRFILFANKIKNFPNSYYNYLVNNLRKIGYNNIPILVELREKIRDLK</sequence>
<feature type="chain" id="PRO_1000011571" description="GTPase Der">
    <location>
        <begin position="1"/>
        <end position="433"/>
    </location>
</feature>
<feature type="domain" description="EngA-type G 1">
    <location>
        <begin position="5"/>
        <end position="167"/>
    </location>
</feature>
<feature type="domain" description="EngA-type G 2">
    <location>
        <begin position="174"/>
        <end position="349"/>
    </location>
</feature>
<feature type="domain" description="KH-like" evidence="1">
    <location>
        <begin position="350"/>
        <end position="429"/>
    </location>
</feature>
<feature type="binding site" evidence="1">
    <location>
        <begin position="11"/>
        <end position="18"/>
    </location>
    <ligand>
        <name>GTP</name>
        <dbReference type="ChEBI" id="CHEBI:37565"/>
        <label>1</label>
    </ligand>
</feature>
<feature type="binding site" evidence="1">
    <location>
        <begin position="58"/>
        <end position="62"/>
    </location>
    <ligand>
        <name>GTP</name>
        <dbReference type="ChEBI" id="CHEBI:37565"/>
        <label>1</label>
    </ligand>
</feature>
<feature type="binding site" evidence="1">
    <location>
        <begin position="119"/>
        <end position="122"/>
    </location>
    <ligand>
        <name>GTP</name>
        <dbReference type="ChEBI" id="CHEBI:37565"/>
        <label>1</label>
    </ligand>
</feature>
<feature type="binding site" evidence="1">
    <location>
        <begin position="180"/>
        <end position="187"/>
    </location>
    <ligand>
        <name>GTP</name>
        <dbReference type="ChEBI" id="CHEBI:37565"/>
        <label>2</label>
    </ligand>
</feature>
<feature type="binding site" evidence="1">
    <location>
        <begin position="227"/>
        <end position="231"/>
    </location>
    <ligand>
        <name>GTP</name>
        <dbReference type="ChEBI" id="CHEBI:37565"/>
        <label>2</label>
    </ligand>
</feature>
<feature type="binding site" evidence="1">
    <location>
        <begin position="292"/>
        <end position="295"/>
    </location>
    <ligand>
        <name>GTP</name>
        <dbReference type="ChEBI" id="CHEBI:37565"/>
        <label>2</label>
    </ligand>
</feature>
<organism>
    <name type="scientific">Borreliella afzelii (strain PKo)</name>
    <name type="common">Borrelia afzelii</name>
    <dbReference type="NCBI Taxonomy" id="390236"/>
    <lineage>
        <taxon>Bacteria</taxon>
        <taxon>Pseudomonadati</taxon>
        <taxon>Spirochaetota</taxon>
        <taxon>Spirochaetia</taxon>
        <taxon>Spirochaetales</taxon>
        <taxon>Borreliaceae</taxon>
        <taxon>Borreliella</taxon>
    </lineage>
</organism>
<proteinExistence type="inferred from homology"/>
<keyword id="KW-0342">GTP-binding</keyword>
<keyword id="KW-0547">Nucleotide-binding</keyword>
<keyword id="KW-0677">Repeat</keyword>
<keyword id="KW-0690">Ribosome biogenesis</keyword>
<name>DER_BORAP</name>
<evidence type="ECO:0000255" key="1">
    <source>
        <dbReference type="HAMAP-Rule" id="MF_00195"/>
    </source>
</evidence>
<dbReference type="EMBL" id="CP000395">
    <property type="protein sequence ID" value="ABH01779.1"/>
    <property type="molecule type" value="Genomic_DNA"/>
</dbReference>
<dbReference type="EMBL" id="CP002933">
    <property type="protein sequence ID" value="AEL69732.1"/>
    <property type="molecule type" value="Genomic_DNA"/>
</dbReference>
<dbReference type="RefSeq" id="WP_011601058.1">
    <property type="nucleotide sequence ID" value="NZ_CP160066.1"/>
</dbReference>
<dbReference type="SMR" id="Q0SMZ9"/>
<dbReference type="STRING" id="29518.BLA32_01720"/>
<dbReference type="KEGG" id="baf:BAPKO_0536"/>
<dbReference type="KEGG" id="bafz:BafPKo_0524"/>
<dbReference type="PATRIC" id="fig|390236.22.peg.505"/>
<dbReference type="eggNOG" id="COG1160">
    <property type="taxonomic scope" value="Bacteria"/>
</dbReference>
<dbReference type="HOGENOM" id="CLU_016077_6_1_12"/>
<dbReference type="OrthoDB" id="9805918at2"/>
<dbReference type="Proteomes" id="UP000005216">
    <property type="component" value="Chromosome"/>
</dbReference>
<dbReference type="GO" id="GO:0005525">
    <property type="term" value="F:GTP binding"/>
    <property type="evidence" value="ECO:0007669"/>
    <property type="project" value="UniProtKB-UniRule"/>
</dbReference>
<dbReference type="GO" id="GO:0042254">
    <property type="term" value="P:ribosome biogenesis"/>
    <property type="evidence" value="ECO:0007669"/>
    <property type="project" value="UniProtKB-KW"/>
</dbReference>
<dbReference type="CDD" id="cd01894">
    <property type="entry name" value="EngA1"/>
    <property type="match status" value="1"/>
</dbReference>
<dbReference type="CDD" id="cd01895">
    <property type="entry name" value="EngA2"/>
    <property type="match status" value="1"/>
</dbReference>
<dbReference type="Gene3D" id="3.30.300.20">
    <property type="match status" value="1"/>
</dbReference>
<dbReference type="Gene3D" id="3.40.50.300">
    <property type="entry name" value="P-loop containing nucleotide triphosphate hydrolases"/>
    <property type="match status" value="2"/>
</dbReference>
<dbReference type="HAMAP" id="MF_00195">
    <property type="entry name" value="GTPase_Der"/>
    <property type="match status" value="1"/>
</dbReference>
<dbReference type="InterPro" id="IPR031166">
    <property type="entry name" value="G_ENGA"/>
</dbReference>
<dbReference type="InterPro" id="IPR006073">
    <property type="entry name" value="GTP-bd"/>
</dbReference>
<dbReference type="InterPro" id="IPR016484">
    <property type="entry name" value="GTPase_Der"/>
</dbReference>
<dbReference type="InterPro" id="IPR032859">
    <property type="entry name" value="KH_dom-like"/>
</dbReference>
<dbReference type="InterPro" id="IPR015946">
    <property type="entry name" value="KH_dom-like_a/b"/>
</dbReference>
<dbReference type="InterPro" id="IPR027417">
    <property type="entry name" value="P-loop_NTPase"/>
</dbReference>
<dbReference type="InterPro" id="IPR005225">
    <property type="entry name" value="Small_GTP-bd"/>
</dbReference>
<dbReference type="NCBIfam" id="TIGR03594">
    <property type="entry name" value="GTPase_EngA"/>
    <property type="match status" value="1"/>
</dbReference>
<dbReference type="NCBIfam" id="TIGR00231">
    <property type="entry name" value="small_GTP"/>
    <property type="match status" value="2"/>
</dbReference>
<dbReference type="PANTHER" id="PTHR43834">
    <property type="entry name" value="GTPASE DER"/>
    <property type="match status" value="1"/>
</dbReference>
<dbReference type="PANTHER" id="PTHR43834:SF6">
    <property type="entry name" value="GTPASE DER"/>
    <property type="match status" value="1"/>
</dbReference>
<dbReference type="Pfam" id="PF14714">
    <property type="entry name" value="KH_dom-like"/>
    <property type="match status" value="1"/>
</dbReference>
<dbReference type="Pfam" id="PF01926">
    <property type="entry name" value="MMR_HSR1"/>
    <property type="match status" value="2"/>
</dbReference>
<dbReference type="PIRSF" id="PIRSF006485">
    <property type="entry name" value="GTP-binding_EngA"/>
    <property type="match status" value="1"/>
</dbReference>
<dbReference type="PRINTS" id="PR00326">
    <property type="entry name" value="GTP1OBG"/>
</dbReference>
<dbReference type="SUPFAM" id="SSF52540">
    <property type="entry name" value="P-loop containing nucleoside triphosphate hydrolases"/>
    <property type="match status" value="2"/>
</dbReference>
<dbReference type="PROSITE" id="PS51712">
    <property type="entry name" value="G_ENGA"/>
    <property type="match status" value="2"/>
</dbReference>
<reference key="1">
    <citation type="journal article" date="2006" name="BMC Genomics">
        <title>Comparative genome analysis: selection pressure on the Borrelia vls cassettes is essential for infectivity.</title>
        <authorList>
            <person name="Gloeckner G."/>
            <person name="Schulte-Spechtel U."/>
            <person name="Schilhabel M."/>
            <person name="Felder M."/>
            <person name="Suehnel J."/>
            <person name="Wilske B."/>
            <person name="Platzer M."/>
        </authorList>
    </citation>
    <scope>NUCLEOTIDE SEQUENCE [LARGE SCALE GENOMIC DNA]</scope>
    <source>
        <strain>PKo</strain>
    </source>
</reference>
<reference key="2">
    <citation type="journal article" date="2011" name="J. Bacteriol.">
        <title>Whole-genome sequences of two Borrelia afzelii and two Borrelia garinii Lyme disease agent isolates.</title>
        <authorList>
            <person name="Casjens S.R."/>
            <person name="Mongodin E.F."/>
            <person name="Qiu W.G."/>
            <person name="Dunn J.J."/>
            <person name="Luft B.J."/>
            <person name="Fraser-Liggett C.M."/>
            <person name="Schutzer S.E."/>
        </authorList>
    </citation>
    <scope>NUCLEOTIDE SEQUENCE [LARGE SCALE GENOMIC DNA]</scope>
    <source>
        <strain>PKo</strain>
    </source>
</reference>
<gene>
    <name evidence="1" type="primary">der</name>
    <name type="synonym">engA</name>
    <name type="ordered locus">BAPKO_0536</name>
    <name type="ordered locus">BafPKo_0524</name>
</gene>
<accession>Q0SMZ9</accession>
<accession>G0ISF1</accession>
<protein>
    <recommendedName>
        <fullName evidence="1">GTPase Der</fullName>
    </recommendedName>
    <alternativeName>
        <fullName evidence="1">GTP-binding protein EngA</fullName>
    </alternativeName>
</protein>
<comment type="function">
    <text evidence="1">GTPase that plays an essential role in the late steps of ribosome biogenesis.</text>
</comment>
<comment type="subunit">
    <text evidence="1">Associates with the 50S ribosomal subunit.</text>
</comment>
<comment type="similarity">
    <text evidence="1">Belongs to the TRAFAC class TrmE-Era-EngA-EngB-Septin-like GTPase superfamily. EngA (Der) GTPase family.</text>
</comment>